<reference key="1">
    <citation type="journal article" date="1999" name="Theor. Appl. Genet.">
        <title>Species-specific nuclear and chloroplast single nucleotide polymorphisms to distinguish Picea glauca, P. mariana and P. rubens.</title>
        <authorList>
            <person name="Germano J."/>
            <person name="Klein A.S."/>
        </authorList>
        <dbReference type="AGRICOLA" id="IND22025547"/>
    </citation>
    <scope>NUCLEOTIDE SEQUENCE [GENOMIC DNA]</scope>
</reference>
<evidence type="ECO:0000250" key="1"/>
<evidence type="ECO:0000255" key="2"/>
<evidence type="ECO:0000305" key="3"/>
<proteinExistence type="inferred from homology"/>
<organism>
    <name type="scientific">Picea mariana</name>
    <name type="common">Black spruce</name>
    <name type="synonym">Abies mariana</name>
    <dbReference type="NCBI Taxonomy" id="3335"/>
    <lineage>
        <taxon>Eukaryota</taxon>
        <taxon>Viridiplantae</taxon>
        <taxon>Streptophyta</taxon>
        <taxon>Embryophyta</taxon>
        <taxon>Tracheophyta</taxon>
        <taxon>Spermatophyta</taxon>
        <taxon>Pinopsida</taxon>
        <taxon>Pinidae</taxon>
        <taxon>Conifers I</taxon>
        <taxon>Pinales</taxon>
        <taxon>Pinaceae</taxon>
        <taxon>Picea</taxon>
    </lineage>
</organism>
<feature type="chain" id="PRO_0000207808" description="Photosystem I reaction center subunit IX">
    <location>
        <begin position="1"/>
        <end position="42"/>
    </location>
</feature>
<feature type="transmembrane region" description="Helical" evidence="2">
    <location>
        <begin position="7"/>
        <end position="27"/>
    </location>
</feature>
<gene>
    <name type="primary">psaJ</name>
</gene>
<keyword id="KW-0150">Chloroplast</keyword>
<keyword id="KW-0472">Membrane</keyword>
<keyword id="KW-0602">Photosynthesis</keyword>
<keyword id="KW-0603">Photosystem I</keyword>
<keyword id="KW-0934">Plastid</keyword>
<keyword id="KW-0793">Thylakoid</keyword>
<keyword id="KW-0812">Transmembrane</keyword>
<keyword id="KW-1133">Transmembrane helix</keyword>
<accession>P69394</accession>
<accession>O64006</accession>
<dbReference type="EMBL" id="AF061363">
    <property type="protein sequence ID" value="AAC35790.1"/>
    <property type="molecule type" value="Genomic_DNA"/>
</dbReference>
<dbReference type="EMBL" id="AF133931">
    <property type="protein sequence ID" value="AAD21631.1"/>
    <property type="molecule type" value="Genomic_DNA"/>
</dbReference>
<dbReference type="EMBL" id="AF133932">
    <property type="protein sequence ID" value="AAD21632.1"/>
    <property type="molecule type" value="Genomic_DNA"/>
</dbReference>
<dbReference type="EMBL" id="AF133933">
    <property type="protein sequence ID" value="AAD21633.1"/>
    <property type="molecule type" value="Genomic_DNA"/>
</dbReference>
<dbReference type="EMBL" id="AF133934">
    <property type="protein sequence ID" value="AAD21634.1"/>
    <property type="molecule type" value="Genomic_DNA"/>
</dbReference>
<dbReference type="RefSeq" id="YP_009913444.1">
    <property type="nucleotide sequence ID" value="NC_050064.1"/>
</dbReference>
<dbReference type="SMR" id="P69394"/>
<dbReference type="GeneID" id="58571676"/>
<dbReference type="GO" id="GO:0009535">
    <property type="term" value="C:chloroplast thylakoid membrane"/>
    <property type="evidence" value="ECO:0007669"/>
    <property type="project" value="UniProtKB-SubCell"/>
</dbReference>
<dbReference type="GO" id="GO:0009522">
    <property type="term" value="C:photosystem I"/>
    <property type="evidence" value="ECO:0007669"/>
    <property type="project" value="UniProtKB-KW"/>
</dbReference>
<dbReference type="GO" id="GO:0015979">
    <property type="term" value="P:photosynthesis"/>
    <property type="evidence" value="ECO:0007669"/>
    <property type="project" value="UniProtKB-UniRule"/>
</dbReference>
<dbReference type="Gene3D" id="1.20.5.510">
    <property type="entry name" value="Single helix bin"/>
    <property type="match status" value="1"/>
</dbReference>
<dbReference type="HAMAP" id="MF_00522">
    <property type="entry name" value="PSI_PsaJ"/>
    <property type="match status" value="1"/>
</dbReference>
<dbReference type="InterPro" id="IPR002615">
    <property type="entry name" value="PSI_PsaJ"/>
</dbReference>
<dbReference type="InterPro" id="IPR036062">
    <property type="entry name" value="PSI_PsaJ_sf"/>
</dbReference>
<dbReference type="PANTHER" id="PTHR36082">
    <property type="match status" value="1"/>
</dbReference>
<dbReference type="PANTHER" id="PTHR36082:SF2">
    <property type="entry name" value="PHOTOSYSTEM I REACTION CENTER SUBUNIT IX"/>
    <property type="match status" value="1"/>
</dbReference>
<dbReference type="Pfam" id="PF01701">
    <property type="entry name" value="PSI_PsaJ"/>
    <property type="match status" value="1"/>
</dbReference>
<dbReference type="SUPFAM" id="SSF81544">
    <property type="entry name" value="Subunit IX of photosystem I reaction centre, PsaJ"/>
    <property type="match status" value="1"/>
</dbReference>
<sequence>MQDLKTYLSTAPVLAISSFIFLAGLLIEINRFFPDALTFAFF</sequence>
<geneLocation type="chloroplast"/>
<name>PSAJ_PICMA</name>
<protein>
    <recommendedName>
        <fullName>Photosystem I reaction center subunit IX</fullName>
    </recommendedName>
    <alternativeName>
        <fullName>PSI-J</fullName>
    </alternativeName>
</protein>
<comment type="function">
    <text evidence="1">May help in the organization of the PsaE and PsaF subunits.</text>
</comment>
<comment type="subcellular location">
    <subcellularLocation>
        <location evidence="1">Plastid</location>
        <location evidence="1">Chloroplast thylakoid membrane</location>
        <topology evidence="1">Single-pass membrane protein</topology>
    </subcellularLocation>
</comment>
<comment type="similarity">
    <text evidence="3">Belongs to the PsaJ family.</text>
</comment>